<feature type="chain" id="PRO_0000246194" description="GPI ethanolamine phosphate transferase 2">
    <location>
        <begin position="1"/>
        <end position="842"/>
    </location>
</feature>
<feature type="transmembrane region" description="Helical" evidence="2">
    <location>
        <begin position="409"/>
        <end position="429"/>
    </location>
</feature>
<feature type="transmembrane region" description="Helical" evidence="2">
    <location>
        <begin position="442"/>
        <end position="462"/>
    </location>
</feature>
<feature type="transmembrane region" description="Helical" evidence="2">
    <location>
        <begin position="468"/>
        <end position="488"/>
    </location>
</feature>
<feature type="transmembrane region" description="Helical" evidence="2">
    <location>
        <begin position="524"/>
        <end position="544"/>
    </location>
</feature>
<feature type="transmembrane region" description="Helical" evidence="2">
    <location>
        <begin position="554"/>
        <end position="574"/>
    </location>
</feature>
<feature type="transmembrane region" description="Helical" evidence="2">
    <location>
        <begin position="615"/>
        <end position="635"/>
    </location>
</feature>
<feature type="transmembrane region" description="Helical" evidence="2">
    <location>
        <begin position="698"/>
        <end position="718"/>
    </location>
</feature>
<feature type="transmembrane region" description="Helical" evidence="2">
    <location>
        <begin position="740"/>
        <end position="760"/>
    </location>
</feature>
<feature type="transmembrane region" description="Helical" evidence="2">
    <location>
        <begin position="783"/>
        <end position="803"/>
    </location>
</feature>
<feature type="transmembrane region" description="Helical" evidence="2">
    <location>
        <begin position="821"/>
        <end position="841"/>
    </location>
</feature>
<feature type="glycosylation site" description="N-linked (GlcNAc...) asparagine" evidence="2">
    <location>
        <position position="186"/>
    </location>
</feature>
<feature type="glycosylation site" description="N-linked (GlcNAc...) asparagine" evidence="2">
    <location>
        <position position="441"/>
    </location>
</feature>
<feature type="glycosylation site" description="N-linked (GlcNAc...) asparagine" evidence="2">
    <location>
        <position position="506"/>
    </location>
</feature>
<feature type="glycosylation site" description="N-linked (GlcNAc...) asparagine" evidence="2">
    <location>
        <position position="551"/>
    </location>
</feature>
<feature type="glycosylation site" description="N-linked (GlcNAc...) asparagine" evidence="2">
    <location>
        <position position="578"/>
    </location>
</feature>
<feature type="glycosylation site" description="N-linked (GlcNAc...) asparagine" evidence="2">
    <location>
        <position position="771"/>
    </location>
</feature>
<organism>
    <name type="scientific">Candida glabrata (strain ATCC 2001 / BCRC 20586 / JCM 3761 / NBRC 0622 / NRRL Y-65 / CBS 138)</name>
    <name type="common">Yeast</name>
    <name type="synonym">Nakaseomyces glabratus</name>
    <dbReference type="NCBI Taxonomy" id="284593"/>
    <lineage>
        <taxon>Eukaryota</taxon>
        <taxon>Fungi</taxon>
        <taxon>Dikarya</taxon>
        <taxon>Ascomycota</taxon>
        <taxon>Saccharomycotina</taxon>
        <taxon>Saccharomycetes</taxon>
        <taxon>Saccharomycetales</taxon>
        <taxon>Saccharomycetaceae</taxon>
        <taxon>Nakaseomyces</taxon>
    </lineage>
</organism>
<proteinExistence type="inferred from homology"/>
<sequence>MLFLLVVAHAIAVLIFGCGFFPQKKVLDGHAALDGTHARDPVFDKLVVVVVDAMRSDFLFDASISKFHFIHEKLADGSAWGFTAHSNPPTVTLPRLKGITTGSTPNFLDAILNVAEDDTSSSLLAQDSWLWQFRNNAGKRIRFFGDDTWLKLFPPVEANEDSQTMFDEYEGTNSFFVSDFTQVDLNVTRHIDRQLRETSEWDVLILHYLGLDHIGHKDGPYSRFMGPKHEEMDSIIRKLYDELDMQSTLLVLMGDHGMNDLGNHGGSSAGETSAGMVFLSDKLAAYKPSKEQSSAKEFPMKIPSLNAGEEKTFHYLKKIQQIDVVPTISSLFNVAIPKNNVGVIIPEFLQLFKDVSLQKAIVKENWNQLSGLTKGKTQIMEETKNFVIEDVIKNMKDVQENLAKTATDYNYPLLFIGCFLSIVITGTIYYRYARHVAININTSILIAIAALMGISVFGSSFIEEEHQFWWWIITGLVLLSMVNLNFSSWKSHIIVLFCLRLIRGWNNSGQKYTYDNVIANLLKGNIDALWWLNLITVTVVGLNLKSLRFGNHTVSLLGFSDLLSMGLLSMITFLYKVNWSIVNGERVPDLFYKWVLETASLIVEDATLYREEDLIHTALIPLARIFFKLFFAVLVSRLMIQKFFQVSDISKSLAVVSRYVTIFLVFQTPSHNIGLFLFFEIINEITVHIIRERYQSDYLLAVIFGIILQFFTFFQSGGTNSIATVDLSNAYNGVSENYNIYVVGLMMCISNFAPTIYWSFYNWRITYANANSSRWQTLVAAKYPFIIIQSTIGCCLLLACIILRYHLFIWSVFSPKLCYYMVWTIFVGIIVHWIPEILLLLT</sequence>
<keyword id="KW-0256">Endoplasmic reticulum</keyword>
<keyword id="KW-0325">Glycoprotein</keyword>
<keyword id="KW-0337">GPI-anchor biosynthesis</keyword>
<keyword id="KW-0472">Membrane</keyword>
<keyword id="KW-1185">Reference proteome</keyword>
<keyword id="KW-0808">Transferase</keyword>
<keyword id="KW-0812">Transmembrane</keyword>
<keyword id="KW-1133">Transmembrane helix</keyword>
<dbReference type="EC" id="2.-.-.-"/>
<dbReference type="EMBL" id="CR380956">
    <property type="protein sequence ID" value="CAG60883.1"/>
    <property type="molecule type" value="Genomic_DNA"/>
</dbReference>
<dbReference type="RefSeq" id="XP_447932.1">
    <property type="nucleotide sequence ID" value="XM_447932.1"/>
</dbReference>
<dbReference type="SMR" id="Q6FPB2"/>
<dbReference type="FunCoup" id="Q6FPB2">
    <property type="interactions" value="504"/>
</dbReference>
<dbReference type="STRING" id="284593.Q6FPB2"/>
<dbReference type="GlyCosmos" id="Q6FPB2">
    <property type="glycosylation" value="6 sites, No reported glycans"/>
</dbReference>
<dbReference type="EnsemblFungi" id="CAGL0J05236g-T">
    <property type="protein sequence ID" value="CAGL0J05236g-T-p1"/>
    <property type="gene ID" value="CAGL0J05236g"/>
</dbReference>
<dbReference type="GeneID" id="2889505"/>
<dbReference type="KEGG" id="cgr:2889505"/>
<dbReference type="CGD" id="CAL0132810">
    <property type="gene designation" value="LAS21"/>
</dbReference>
<dbReference type="VEuPathDB" id="FungiDB:CAGL0J05236g"/>
<dbReference type="eggNOG" id="KOG2125">
    <property type="taxonomic scope" value="Eukaryota"/>
</dbReference>
<dbReference type="HOGENOM" id="CLU_004770_0_0_1"/>
<dbReference type="InParanoid" id="Q6FPB2"/>
<dbReference type="OMA" id="SWNQTGQ"/>
<dbReference type="UniPathway" id="UPA00196"/>
<dbReference type="Proteomes" id="UP000002428">
    <property type="component" value="Chromosome J"/>
</dbReference>
<dbReference type="GO" id="GO:0005789">
    <property type="term" value="C:endoplasmic reticulum membrane"/>
    <property type="evidence" value="ECO:0007669"/>
    <property type="project" value="UniProtKB-SubCell"/>
</dbReference>
<dbReference type="GO" id="GO:0005886">
    <property type="term" value="C:plasma membrane"/>
    <property type="evidence" value="ECO:0007669"/>
    <property type="project" value="EnsemblFungi"/>
</dbReference>
<dbReference type="GO" id="GO:0051267">
    <property type="term" value="F:CP2 mannose-ethanolamine phosphotransferase activity"/>
    <property type="evidence" value="ECO:0007669"/>
    <property type="project" value="EnsemblFungi"/>
</dbReference>
<dbReference type="GO" id="GO:0006506">
    <property type="term" value="P:GPI anchor biosynthetic process"/>
    <property type="evidence" value="ECO:0007669"/>
    <property type="project" value="UniProtKB-UniPathway"/>
</dbReference>
<dbReference type="CDD" id="cd16024">
    <property type="entry name" value="GPI_EPT_2"/>
    <property type="match status" value="1"/>
</dbReference>
<dbReference type="Gene3D" id="3.40.720.10">
    <property type="entry name" value="Alkaline Phosphatase, subunit A"/>
    <property type="match status" value="1"/>
</dbReference>
<dbReference type="InterPro" id="IPR017850">
    <property type="entry name" value="Alkaline_phosphatase_core_sf"/>
</dbReference>
<dbReference type="InterPro" id="IPR002591">
    <property type="entry name" value="Phosphodiest/P_Trfase"/>
</dbReference>
<dbReference type="InterPro" id="IPR037674">
    <property type="entry name" value="PIG-G_N"/>
</dbReference>
<dbReference type="InterPro" id="IPR039527">
    <property type="entry name" value="PIGG/GPI7"/>
</dbReference>
<dbReference type="InterPro" id="IPR045687">
    <property type="entry name" value="PIGG/GPI7_C"/>
</dbReference>
<dbReference type="PANTHER" id="PTHR23072:SF0">
    <property type="entry name" value="GPI ETHANOLAMINE PHOSPHATE TRANSFERASE 2"/>
    <property type="match status" value="1"/>
</dbReference>
<dbReference type="PANTHER" id="PTHR23072">
    <property type="entry name" value="PHOSPHATIDYLINOSITOL GLYCAN-RELATED"/>
    <property type="match status" value="1"/>
</dbReference>
<dbReference type="Pfam" id="PF01663">
    <property type="entry name" value="Phosphodiest"/>
    <property type="match status" value="1"/>
</dbReference>
<dbReference type="Pfam" id="PF19316">
    <property type="entry name" value="PIGO_PIGG"/>
    <property type="match status" value="1"/>
</dbReference>
<dbReference type="SUPFAM" id="SSF53649">
    <property type="entry name" value="Alkaline phosphatase-like"/>
    <property type="match status" value="1"/>
</dbReference>
<gene>
    <name type="primary">LAS21</name>
    <name type="synonym">GPI7</name>
    <name type="ordered locus">CAGL0J05236g</name>
</gene>
<evidence type="ECO:0000250" key="1"/>
<evidence type="ECO:0000255" key="2"/>
<evidence type="ECO:0000305" key="3"/>
<name>GPI7_CANGA</name>
<accession>Q6FPB2</accession>
<protein>
    <recommendedName>
        <fullName>GPI ethanolamine phosphate transferase 2</fullName>
        <ecNumber>2.-.-.-</ecNumber>
    </recommendedName>
    <alternativeName>
        <fullName>Glycosylphosphatidylinositol-anchor biosynthesis protein 7</fullName>
    </alternativeName>
</protein>
<comment type="function">
    <text evidence="1">Ethanolamine phosphate transferase involved in glycosylphosphatidylinositol-anchor biosynthesis. Transfers ethanolamine phosphate to the GPI second mannose (By similarity).</text>
</comment>
<comment type="pathway">
    <text>Glycolipid biosynthesis; glycosylphosphatidylinositol-anchor biosynthesis.</text>
</comment>
<comment type="subcellular location">
    <subcellularLocation>
        <location evidence="1">Endoplasmic reticulum membrane</location>
        <topology evidence="1">Multi-pass membrane protein</topology>
    </subcellularLocation>
</comment>
<comment type="similarity">
    <text evidence="3">Belongs to the PIGG/PIGN/PIGO family. PIGG subfamily.</text>
</comment>
<reference key="1">
    <citation type="journal article" date="2004" name="Nature">
        <title>Genome evolution in yeasts.</title>
        <authorList>
            <person name="Dujon B."/>
            <person name="Sherman D."/>
            <person name="Fischer G."/>
            <person name="Durrens P."/>
            <person name="Casaregola S."/>
            <person name="Lafontaine I."/>
            <person name="de Montigny J."/>
            <person name="Marck C."/>
            <person name="Neuveglise C."/>
            <person name="Talla E."/>
            <person name="Goffard N."/>
            <person name="Frangeul L."/>
            <person name="Aigle M."/>
            <person name="Anthouard V."/>
            <person name="Babour A."/>
            <person name="Barbe V."/>
            <person name="Barnay S."/>
            <person name="Blanchin S."/>
            <person name="Beckerich J.-M."/>
            <person name="Beyne E."/>
            <person name="Bleykasten C."/>
            <person name="Boisrame A."/>
            <person name="Boyer J."/>
            <person name="Cattolico L."/>
            <person name="Confanioleri F."/>
            <person name="de Daruvar A."/>
            <person name="Despons L."/>
            <person name="Fabre E."/>
            <person name="Fairhead C."/>
            <person name="Ferry-Dumazet H."/>
            <person name="Groppi A."/>
            <person name="Hantraye F."/>
            <person name="Hennequin C."/>
            <person name="Jauniaux N."/>
            <person name="Joyet P."/>
            <person name="Kachouri R."/>
            <person name="Kerrest A."/>
            <person name="Koszul R."/>
            <person name="Lemaire M."/>
            <person name="Lesur I."/>
            <person name="Ma L."/>
            <person name="Muller H."/>
            <person name="Nicaud J.-M."/>
            <person name="Nikolski M."/>
            <person name="Oztas S."/>
            <person name="Ozier-Kalogeropoulos O."/>
            <person name="Pellenz S."/>
            <person name="Potier S."/>
            <person name="Richard G.-F."/>
            <person name="Straub M.-L."/>
            <person name="Suleau A."/>
            <person name="Swennen D."/>
            <person name="Tekaia F."/>
            <person name="Wesolowski-Louvel M."/>
            <person name="Westhof E."/>
            <person name="Wirth B."/>
            <person name="Zeniou-Meyer M."/>
            <person name="Zivanovic Y."/>
            <person name="Bolotin-Fukuhara M."/>
            <person name="Thierry A."/>
            <person name="Bouchier C."/>
            <person name="Caudron B."/>
            <person name="Scarpelli C."/>
            <person name="Gaillardin C."/>
            <person name="Weissenbach J."/>
            <person name="Wincker P."/>
            <person name="Souciet J.-L."/>
        </authorList>
    </citation>
    <scope>NUCLEOTIDE SEQUENCE [LARGE SCALE GENOMIC DNA]</scope>
    <source>
        <strain>ATCC 2001 / BCRC 20586 / JCM 3761 / NBRC 0622 / NRRL Y-65 / CBS 138</strain>
    </source>
</reference>